<feature type="signal peptide" evidence="1">
    <location>
        <begin position="1"/>
        <end position="23"/>
    </location>
</feature>
<feature type="propeptide" id="PRO_0000459810" evidence="6">
    <location>
        <begin position="24"/>
        <end position="29"/>
    </location>
</feature>
<feature type="peptide" id="PRO_5026722874" description="U13-myrmicitoxin-Tb1a" evidence="2">
    <location>
        <begin position="30"/>
        <end position="52"/>
    </location>
</feature>
<feature type="peptide" id="PRO_0000459811" description="U13-myrmicitoxin-Tb1a (cleaved)" evidence="2">
    <location>
        <begin position="30"/>
        <end position="47"/>
    </location>
</feature>
<feature type="modified residue" description="Lysine amide" evidence="2">
    <location>
        <position position="52"/>
    </location>
</feature>
<dbReference type="EMBL" id="MN397952">
    <property type="protein sequence ID" value="QJP03499.1"/>
    <property type="molecule type" value="mRNA"/>
</dbReference>
<dbReference type="GO" id="GO:0005576">
    <property type="term" value="C:extracellular region"/>
    <property type="evidence" value="ECO:0000314"/>
    <property type="project" value="UniProtKB"/>
</dbReference>
<dbReference type="GO" id="GO:0090729">
    <property type="term" value="F:toxin activity"/>
    <property type="evidence" value="ECO:0007669"/>
    <property type="project" value="UniProtKB-KW"/>
</dbReference>
<reference evidence="7" key="1">
    <citation type="journal article" date="2018" name="J. Proteome Res.">
        <title>Deciphering the Molecular Diversity of an Ant Venom Peptidome through a Venomics Approach.</title>
        <authorList>
            <person name="Touchard A."/>
            <person name="Tene N."/>
            <person name="Song P.C.T."/>
            <person name="Lefranc B."/>
            <person name="Leprince J."/>
            <person name="Treilhou M."/>
            <person name="Bonnafe E."/>
        </authorList>
    </citation>
    <scope>NUCLEOTIDE SEQUENCE [MRNA]</scope>
    <scope>MASS SPECTROMETRY</scope>
    <scope>SUBCELLULAR LOCATION</scope>
    <scope>AMIDATION AT LYS-52</scope>
    <source>
        <tissue>Venom</tissue>
        <tissue>Venom gland</tissue>
    </source>
</reference>
<reference key="2">
    <citation type="journal article" date="2023" name="Toxins">
        <title>Discovery of an insect neuroactive helix ring peptide from ant venom.</title>
        <authorList>
            <person name="Barasse V."/>
            <person name="Jouvensal L."/>
            <person name="Boy G."/>
            <person name="Billet A."/>
            <person name="Ascoet S."/>
            <person name="Lefranc B."/>
            <person name="Leprince J."/>
            <person name="Dejean A."/>
            <person name="Lacotte V."/>
            <person name="Rahioui I."/>
            <person name="Sivignon C."/>
            <person name="Gaget K."/>
            <person name="Ribeiro Lopes M."/>
            <person name="Calevro F."/>
            <person name="Da Silva P."/>
            <person name="Loth K."/>
            <person name="Paquet F."/>
            <person name="Treilhou M."/>
            <person name="Bonnafe E."/>
            <person name="Touchard A."/>
        </authorList>
    </citation>
    <scope>FUNCTION</scope>
    <scope>BIOASSAY</scope>
    <scope>SYNTHESIS OF 30-52</scope>
</reference>
<comment type="function">
    <text evidence="3">In vivo, this neurotoxin paralyzes about 70% of blowflies (L.caesar) one hour after intrathoracic injection, when tested at high doses (45 nmol/g).</text>
</comment>
<comment type="subcellular location">
    <subcellularLocation>
        <location evidence="2">Secreted</location>
    </subcellularLocation>
</comment>
<comment type="tissue specificity">
    <text evidence="6">Expressed by the venom gland.</text>
</comment>
<comment type="mass spectrometry" mass="2003.04" method="Electrospray" evidence="2">
    <molecule>U13-myrmicitoxin-Tb1a (cleaved)</molecule>
</comment>
<comment type="mass spectrometry" mass="2636.32" method="Electrospray" evidence="2">
    <molecule>U13-myrmicitoxin-Tb1a</molecule>
</comment>
<proteinExistence type="evidence at protein level"/>
<protein>
    <recommendedName>
        <fullName evidence="4 5">U13-myrmicitoxin-Tb1a</fullName>
        <shortName evidence="4 5">U13-MYRTX-Tb1a</shortName>
    </recommendedName>
    <component>
        <recommendedName>
            <fullName evidence="4">U13-myrmicitoxin-Tb1a (cleaved)</fullName>
            <shortName evidence="4">U13-MYRTX-Tb1a (cleaved)</shortName>
        </recommendedName>
    </component>
</protein>
<name>TX13A_TETBN</name>
<accession>A0A6M3Z541</accession>
<sequence length="53" mass="5746">MKLIYIFSLVAVIAVTMIPGIMGEAEAEGRPPQIGIFDQIDKGMAAFMDLFKG</sequence>
<evidence type="ECO:0000255" key="1"/>
<evidence type="ECO:0000269" key="2">
    <source>
    </source>
</evidence>
<evidence type="ECO:0000269" key="3">
    <source>
    </source>
</evidence>
<evidence type="ECO:0000303" key="4">
    <source>
    </source>
</evidence>
<evidence type="ECO:0000303" key="5">
    <source>
    </source>
</evidence>
<evidence type="ECO:0000305" key="6">
    <source>
    </source>
</evidence>
<evidence type="ECO:0000312" key="7">
    <source>
        <dbReference type="EMBL" id="QJP03499.1"/>
    </source>
</evidence>
<keyword id="KW-0027">Amidation</keyword>
<keyword id="KW-0528">Neurotoxin</keyword>
<keyword id="KW-0964">Secreted</keyword>
<keyword id="KW-0732">Signal</keyword>
<keyword id="KW-0800">Toxin</keyword>
<organism>
    <name type="scientific">Tetramorium bicarinatum</name>
    <name type="common">Tramp ant</name>
    <dbReference type="NCBI Taxonomy" id="219812"/>
    <lineage>
        <taxon>Eukaryota</taxon>
        <taxon>Metazoa</taxon>
        <taxon>Ecdysozoa</taxon>
        <taxon>Arthropoda</taxon>
        <taxon>Hexapoda</taxon>
        <taxon>Insecta</taxon>
        <taxon>Pterygota</taxon>
        <taxon>Neoptera</taxon>
        <taxon>Endopterygota</taxon>
        <taxon>Hymenoptera</taxon>
        <taxon>Apocrita</taxon>
        <taxon>Aculeata</taxon>
        <taxon>Formicoidea</taxon>
        <taxon>Formicidae</taxon>
        <taxon>Myrmicinae</taxon>
        <taxon>Tetramorium</taxon>
    </lineage>
</organism>